<reference key="1">
    <citation type="journal article" date="1993" name="Oncogene">
        <title>PCR mediated detection of a new human receptor-tyrosine-kinase, HEK 2.</title>
        <authorList>
            <person name="Boehme B."/>
            <person name="Holtrich U."/>
            <person name="Wolf G."/>
            <person name="Luzius H."/>
            <person name="Grzeschik K.-H."/>
            <person name="Strebhardt K."/>
            <person name="Ruebsamen-Waigmann H."/>
        </authorList>
    </citation>
    <scope>NUCLEOTIDE SEQUENCE [MRNA]</scope>
    <scope>IDENTIFICATION OF EFNB1 AND EFNB2 AS LIGANDS</scope>
    <scope>AUTOPHOSPHORYLATION</scope>
    <source>
        <tissue>Embryo</tissue>
    </source>
</reference>
<reference key="2">
    <citation type="journal article" date="2004" name="Genome Res.">
        <title>The status, quality, and expansion of the NIH full-length cDNA project: the Mammalian Gene Collection (MGC).</title>
        <authorList>
            <consortium name="The MGC Project Team"/>
        </authorList>
    </citation>
    <scope>NUCLEOTIDE SEQUENCE [LARGE SCALE MRNA]</scope>
    <source>
        <tissue>Uterus</tissue>
    </source>
</reference>
<reference key="3">
    <citation type="journal article" date="1997" name="Cell">
        <title>Unified nomenclature for Eph family receptors and their ligands, the ephrins.</title>
        <authorList>
            <consortium name="Eph nomenclature committee"/>
        </authorList>
    </citation>
    <scope>NOMENCLATURE</scope>
</reference>
<reference key="4">
    <citation type="journal article" date="1998" name="Oncogene">
        <title>Tyrosine-614, the major autophosphorylation site of the receptor tyrosine kinase HEK2, functions as multi-docking site for SH2-domain mediated interactions.</title>
        <authorList>
            <person name="Hock B."/>
            <person name="Boehme B."/>
            <person name="Karn T."/>
            <person name="Feller S."/>
            <person name="Ruebsamen-Waigmann H."/>
            <person name="Strebhardt K."/>
        </authorList>
    </citation>
    <scope>PHOSPHORYLATION AT TYR-614</scope>
    <scope>MUTAGENESIS OF TYR-614 AND LYS-665</scope>
</reference>
<reference key="5">
    <citation type="journal article" date="2005" name="J. Biol. Chem.">
        <title>Inhibition of integrin-mediated cell adhesion but not directional cell migration requires catalytic activity of EphB3 receptor tyrosine kinase. Role of Rho family small GTPases.</title>
        <authorList>
            <person name="Miao H."/>
            <person name="Strebhardt K."/>
            <person name="Pasquale E.B."/>
            <person name="Shen T.L."/>
            <person name="Guan J.L."/>
            <person name="Wang B."/>
        </authorList>
    </citation>
    <scope>AUTOPHOSPHORYLATION</scope>
    <scope>FUNCTION IN CELL ADHESION</scope>
    <scope>FUNCTION IN CELL MIGRATION</scope>
    <scope>SUBCELLULAR LOCATION</scope>
</reference>
<reference key="6">
    <citation type="journal article" date="2010" name="Sci. Signal.">
        <title>Quantitative phosphoproteomics reveals widespread full phosphorylation site occupancy during mitosis.</title>
        <authorList>
            <person name="Olsen J.V."/>
            <person name="Vermeulen M."/>
            <person name="Santamaria A."/>
            <person name="Kumar C."/>
            <person name="Miller M.L."/>
            <person name="Jensen L.J."/>
            <person name="Gnad F."/>
            <person name="Cox J."/>
            <person name="Jensen T.S."/>
            <person name="Nigg E.A."/>
            <person name="Brunak S."/>
            <person name="Mann M."/>
        </authorList>
    </citation>
    <scope>IDENTIFICATION BY MASS SPECTROMETRY [LARGE SCALE ANALYSIS]</scope>
    <source>
        <tissue>Cervix carcinoma</tissue>
    </source>
</reference>
<reference key="7">
    <citation type="journal article" date="2021" name="Autophagy">
        <title>RNF186 regulates EFNB1 (ephrin B1)-EPHB2-induced autophagy in the colonic epithelial cells for the maintenance of intestinal homeostasis.</title>
        <authorList>
            <person name="Zhang H."/>
            <person name="Cui Z."/>
            <person name="Cheng D."/>
            <person name="Du Y."/>
            <person name="Guo X."/>
            <person name="Gao R."/>
            <person name="Chen J."/>
            <person name="Sun W."/>
            <person name="He R."/>
            <person name="Ma X."/>
            <person name="Peng Q."/>
            <person name="Martin B.N."/>
            <person name="Yan W."/>
            <person name="Rong Y."/>
            <person name="Wang C."/>
        </authorList>
    </citation>
    <scope>UBIQUITINATION BY RNF186</scope>
</reference>
<reference key="8">
    <citation type="submission" date="2011-01" db="PDB data bank">
        <title>Ligand binding domain of human EPHB3.</title>
        <authorList>
            <consortium name="Structural genomics consortium (SGC)"/>
        </authorList>
    </citation>
    <scope>X-RAY CRYSTALLOGRAPHY (2.1 ANGSTROMS) OF 39-211</scope>
    <scope>DISULFIDE BOND</scope>
</reference>
<reference key="9">
    <citation type="journal article" date="2007" name="Nature">
        <title>Patterns of somatic mutation in human cancer genomes.</title>
        <authorList>
            <person name="Greenman C."/>
            <person name="Stephens P."/>
            <person name="Smith R."/>
            <person name="Dalgliesh G.L."/>
            <person name="Hunter C."/>
            <person name="Bignell G."/>
            <person name="Davies H."/>
            <person name="Teague J."/>
            <person name="Butler A."/>
            <person name="Stevens C."/>
            <person name="Edkins S."/>
            <person name="O'Meara S."/>
            <person name="Vastrik I."/>
            <person name="Schmidt E.E."/>
            <person name="Avis T."/>
            <person name="Barthorpe S."/>
            <person name="Bhamra G."/>
            <person name="Buck G."/>
            <person name="Choudhury B."/>
            <person name="Clements J."/>
            <person name="Cole J."/>
            <person name="Dicks E."/>
            <person name="Forbes S."/>
            <person name="Gray K."/>
            <person name="Halliday K."/>
            <person name="Harrison R."/>
            <person name="Hills K."/>
            <person name="Hinton J."/>
            <person name="Jenkinson A."/>
            <person name="Jones D."/>
            <person name="Menzies A."/>
            <person name="Mironenko T."/>
            <person name="Perry J."/>
            <person name="Raine K."/>
            <person name="Richardson D."/>
            <person name="Shepherd R."/>
            <person name="Small A."/>
            <person name="Tofts C."/>
            <person name="Varian J."/>
            <person name="Webb T."/>
            <person name="West S."/>
            <person name="Widaa S."/>
            <person name="Yates A."/>
            <person name="Cahill D.P."/>
            <person name="Louis D.N."/>
            <person name="Goldstraw P."/>
            <person name="Nicholson A.G."/>
            <person name="Brasseur F."/>
            <person name="Looijenga L."/>
            <person name="Weber B.L."/>
            <person name="Chiew Y.-E."/>
            <person name="DeFazio A."/>
            <person name="Greaves M.F."/>
            <person name="Green A.R."/>
            <person name="Campbell P."/>
            <person name="Birney E."/>
            <person name="Easton D.F."/>
            <person name="Chenevix-Trench G."/>
            <person name="Tan M.-H."/>
            <person name="Khoo S.K."/>
            <person name="Teh B.T."/>
            <person name="Yuen S.T."/>
            <person name="Leung S.Y."/>
            <person name="Wooster R."/>
            <person name="Futreal P.A."/>
            <person name="Stratton M.R."/>
        </authorList>
    </citation>
    <scope>VARIANTS [LARGE SCALE ANALYSIS] LEU-168; CYS-440; VAL-579; LEU-601 AND TRP-724</scope>
</reference>
<sequence>MARARPPPPPSPPPGLLPLLPPLLLLPLLLLPAGCRALEETLMDTKWVTSELAWTSHPESGWEEVSGYDEAMNPIRTYQVCNVRESSQNNWLRTGFIWRRDVQRVYVELKFTVRDCNSIPNIPGSCKETFNLFYYEADSDVASASSPFWMENPYVKVDTIAPDESFSRLDAGRVNTKVRSFGPLSKAGFYLAFQDQGACMSLISVRAFYKKCASTTAGFALFPETLTGAEPTSLVIAPGTCIPNAVEVSVPLKLYCNGDGEWMVPVGACTCATGHEPAAKESQCRPCPPGSYKAKQGEGPCLPCPPNSRTTSPAASICTCHNNFYRADSDSADSACTTVPSPPRGVISNVNETSLILEWSEPRDLGGRDDLLYNVICKKCHGAGGASACSRCDDNVEFVPRQLGLTERRVHISHLLAHTRYTFEVQAVNGVSGKSPLPPRYAAVNITTNQAAPSEVPTLRLHSSSGSSLTLSWAPPERPNGVILDYEMKYFEKSEGIASTVTSQMNSVQLDGLRPDARYVVQVRARTVAGYGQYSRPAEFETTSERGSGAQQLQEQLPLIVGSATAGLVFVVAVVVIAIVCLRKQRHGSDSEYTEKLQQYIAPGMKVYIDPFTYEDPNEAVREFAKEIDVSCVKIEEVIGAGEFGEVCRGRLKQPGRREVFVAIKTLKVGYTERQRRDFLSEASIMGQFDHPNIIRLEGVVTKSRPVMILTEFMENCALDSFLRLNDGQFTVIQLVGMLRGIAAGMKYLSEMNYVHRDLAARNILVNSNLVCKVSDFGLSRFLEDDPSDPTYTSSLGGKIPIRWTAPEAIAYRKFTSASDVWSYGIVMWEVMSYGERPYWDMSNQDVINAVEQDYRLPPPMDCPTALHQLMLDCWVRDRNLRPKFSQIVNTLDKLIRNAASLKVIASAQSGMSQPLLDRTVPDYTTFTTVGDWLDAIKMGRYKESFVSAGFASFDLVAQMTAEDLLRIGVTLAGHQKKILSSIQDMRLQMNQTLPVQV</sequence>
<organism>
    <name type="scientific">Homo sapiens</name>
    <name type="common">Human</name>
    <dbReference type="NCBI Taxonomy" id="9606"/>
    <lineage>
        <taxon>Eukaryota</taxon>
        <taxon>Metazoa</taxon>
        <taxon>Chordata</taxon>
        <taxon>Craniata</taxon>
        <taxon>Vertebrata</taxon>
        <taxon>Euteleostomi</taxon>
        <taxon>Mammalia</taxon>
        <taxon>Eutheria</taxon>
        <taxon>Euarchontoglires</taxon>
        <taxon>Primates</taxon>
        <taxon>Haplorrhini</taxon>
        <taxon>Catarrhini</taxon>
        <taxon>Hominidae</taxon>
        <taxon>Homo</taxon>
    </lineage>
</organism>
<proteinExistence type="evidence at protein level"/>
<comment type="function">
    <text evidence="8">Receptor tyrosine kinase which binds promiscuously transmembrane ephrin-B family ligands residing on adjacent cells, leading to contact-dependent bidirectional signaling into neighboring cells. The signaling pathway downstream of the receptor is referred to as forward signaling while the signaling pathway downstream of the ephrin ligand is referred to as reverse signaling. Generally has an overlapping and redundant function with EPHB2. Like EPHB2, functions in axon guidance during development regulating for instance the neurons forming the corpus callosum and the anterior commissure, 2 major interhemispheric connections between the temporal lobes of the cerebral cortex. In addition to its role in axon guidance also plays an important redundant role with other ephrin-B receptors in development and maturation of dendritic spines and the formation of excitatory synapses. Controls other aspects of development through regulation of cell migration and positioning. This includes angiogenesis, palate development and thymic epithelium development for instance. Forward and reverse signaling through the EFNB2/EPHB3 complex also regulate migration and adhesion of cells that tubularize the urethra and septate the cloaca. Finally, plays an important role in intestinal epithelium differentiation segregating progenitor from differentiated cells in the crypt.</text>
</comment>
<comment type="catalytic activity">
    <reaction evidence="7">
        <text>L-tyrosyl-[protein] + ATP = O-phospho-L-tyrosyl-[protein] + ADP + H(+)</text>
        <dbReference type="Rhea" id="RHEA:10596"/>
        <dbReference type="Rhea" id="RHEA-COMP:10136"/>
        <dbReference type="Rhea" id="RHEA-COMP:20101"/>
        <dbReference type="ChEBI" id="CHEBI:15378"/>
        <dbReference type="ChEBI" id="CHEBI:30616"/>
        <dbReference type="ChEBI" id="CHEBI:46858"/>
        <dbReference type="ChEBI" id="CHEBI:61978"/>
        <dbReference type="ChEBI" id="CHEBI:456216"/>
        <dbReference type="EC" id="2.7.10.1"/>
    </reaction>
</comment>
<comment type="subunit">
    <text evidence="1">Heterotetramer upon binding of the ligand. The heterotetramer is composed of an ephrin dimer and a receptor dimer. Oligomerization is probably required to induce biological responses (By similarity).</text>
</comment>
<comment type="interaction">
    <interactant intactId="EBI-968308">
        <id>P54753</id>
    </interactant>
    <interactant intactId="EBI-749311">
        <id>P37235</id>
        <label>HPCAL1</label>
    </interactant>
    <organismsDiffer>false</organismsDiffer>
    <experiments>3</experiments>
</comment>
<comment type="interaction">
    <interactant intactId="EBI-968308">
        <id>P54753</id>
    </interactant>
    <interactant intactId="EBI-7116203">
        <id>O75031</id>
        <label>HSF2BP</label>
    </interactant>
    <organismsDiffer>false</organismsDiffer>
    <experiments>3</experiments>
</comment>
<comment type="subcellular location">
    <subcellularLocation>
        <location evidence="8">Cell membrane</location>
        <topology evidence="8">Single-pass type I membrane protein</topology>
    </subcellularLocation>
    <subcellularLocation>
        <location evidence="1">Cell projection</location>
        <location evidence="1">Dendrite</location>
    </subcellularLocation>
</comment>
<comment type="tissue specificity">
    <text>Ubiquitous.</text>
</comment>
<comment type="PTM">
    <text evidence="11">Phosphorylated. Autophosphorylates upon ligand-binding. Autophosphorylation on Tyr-614 is required for interaction with SH2 domain-containing proteins.</text>
</comment>
<comment type="PTM">
    <text evidence="10">Ubiquitinated by RNF186, mainly through 'Lys-48' and 'Lys-63'-linked polyubiquitin chains.</text>
</comment>
<comment type="similarity">
    <text evidence="3">Belongs to the protein kinase superfamily. Tyr protein kinase family. Ephrin receptor subfamily.</text>
</comment>
<evidence type="ECO:0000250" key="1"/>
<evidence type="ECO:0000255" key="2"/>
<evidence type="ECO:0000255" key="3">
    <source>
        <dbReference type="PROSITE-ProRule" id="PRU00159"/>
    </source>
</evidence>
<evidence type="ECO:0000255" key="4">
    <source>
        <dbReference type="PROSITE-ProRule" id="PRU00184"/>
    </source>
</evidence>
<evidence type="ECO:0000255" key="5">
    <source>
        <dbReference type="PROSITE-ProRule" id="PRU00316"/>
    </source>
</evidence>
<evidence type="ECO:0000255" key="6">
    <source>
        <dbReference type="PROSITE-ProRule" id="PRU00883"/>
    </source>
</evidence>
<evidence type="ECO:0000255" key="7">
    <source>
        <dbReference type="PROSITE-ProRule" id="PRU10028"/>
    </source>
</evidence>
<evidence type="ECO:0000269" key="8">
    <source>
    </source>
</evidence>
<evidence type="ECO:0000269" key="9">
    <source>
    </source>
</evidence>
<evidence type="ECO:0000269" key="10">
    <source>
    </source>
</evidence>
<evidence type="ECO:0000269" key="11">
    <source>
    </source>
</evidence>
<evidence type="ECO:0000269" key="12">
    <source ref="8"/>
</evidence>
<evidence type="ECO:0000305" key="13"/>
<evidence type="ECO:0007829" key="14">
    <source>
        <dbReference type="PDB" id="3P1I"/>
    </source>
</evidence>
<evidence type="ECO:0007829" key="15">
    <source>
        <dbReference type="PDB" id="5L6O"/>
    </source>
</evidence>
<evidence type="ECO:0007829" key="16">
    <source>
        <dbReference type="PDB" id="5L6P"/>
    </source>
</evidence>
<protein>
    <recommendedName>
        <fullName>Ephrin type-B receptor 3</fullName>
        <ecNumber>2.7.10.1</ecNumber>
    </recommendedName>
    <alternativeName>
        <fullName>EPH-like tyrosine kinase 2</fullName>
        <shortName>EPH-like kinase 2</shortName>
    </alternativeName>
    <alternativeName>
        <fullName>Embryonic kinase 2</fullName>
        <shortName>EK2</shortName>
        <shortName>hEK2</shortName>
    </alternativeName>
    <alternativeName>
        <fullName>Tyrosine-protein kinase TYRO6</fullName>
    </alternativeName>
</protein>
<dbReference type="EC" id="2.7.10.1"/>
<dbReference type="EMBL" id="X75208">
    <property type="protein sequence ID" value="CAA53021.1"/>
    <property type="molecule type" value="mRNA"/>
</dbReference>
<dbReference type="EMBL" id="BC052968">
    <property type="protein sequence ID" value="AAH52968.1"/>
    <property type="molecule type" value="mRNA"/>
</dbReference>
<dbReference type="CCDS" id="CCDS3268.1"/>
<dbReference type="PIR" id="S37627">
    <property type="entry name" value="S37627"/>
</dbReference>
<dbReference type="RefSeq" id="NP_004434.2">
    <property type="nucleotide sequence ID" value="NM_004443.3"/>
</dbReference>
<dbReference type="PDB" id="3P1I">
    <property type="method" value="X-ray"/>
    <property type="resolution" value="2.10 A"/>
    <property type="chains" value="A/B/C=39-211"/>
</dbReference>
<dbReference type="PDB" id="3ZFY">
    <property type="method" value="X-ray"/>
    <property type="resolution" value="2.20 A"/>
    <property type="chains" value="A/B=616-910"/>
</dbReference>
<dbReference type="PDB" id="5L6O">
    <property type="method" value="X-ray"/>
    <property type="resolution" value="1.88 A"/>
    <property type="chains" value="A=616-910"/>
</dbReference>
<dbReference type="PDB" id="5L6P">
    <property type="method" value="X-ray"/>
    <property type="resolution" value="2.26 A"/>
    <property type="chains" value="A=616-910"/>
</dbReference>
<dbReference type="PDBsum" id="3P1I"/>
<dbReference type="PDBsum" id="3ZFY"/>
<dbReference type="PDBsum" id="5L6O"/>
<dbReference type="PDBsum" id="5L6P"/>
<dbReference type="SMR" id="P54753"/>
<dbReference type="BioGRID" id="108363">
    <property type="interactions" value="26"/>
</dbReference>
<dbReference type="FunCoup" id="P54753">
    <property type="interactions" value="633"/>
</dbReference>
<dbReference type="IntAct" id="P54753">
    <property type="interactions" value="25"/>
</dbReference>
<dbReference type="MINT" id="P54753"/>
<dbReference type="STRING" id="9606.ENSP00000332118"/>
<dbReference type="BindingDB" id="P54753"/>
<dbReference type="ChEMBL" id="CHEMBL4901"/>
<dbReference type="DrugCentral" id="P54753"/>
<dbReference type="GuidetoPHARMACOLOGY" id="1832"/>
<dbReference type="GlyConnect" id="1213">
    <property type="glycosylation" value="10 N-Linked glycans (2 sites)"/>
</dbReference>
<dbReference type="GlyCosmos" id="P54753">
    <property type="glycosylation" value="3 sites, 11 glycans"/>
</dbReference>
<dbReference type="GlyGen" id="P54753">
    <property type="glycosylation" value="3 sites, 12 N-linked glycans (2 sites), 1 O-linked glycan (1 site)"/>
</dbReference>
<dbReference type="iPTMnet" id="P54753"/>
<dbReference type="PhosphoSitePlus" id="P54753"/>
<dbReference type="SwissPalm" id="P54753"/>
<dbReference type="BioMuta" id="EPHB3"/>
<dbReference type="DMDM" id="76803655"/>
<dbReference type="CPTAC" id="CPTAC-2917"/>
<dbReference type="CPTAC" id="CPTAC-2918"/>
<dbReference type="jPOST" id="P54753"/>
<dbReference type="MassIVE" id="P54753"/>
<dbReference type="PaxDb" id="9606-ENSP00000332118"/>
<dbReference type="PeptideAtlas" id="P54753"/>
<dbReference type="ProteomicsDB" id="56711"/>
<dbReference type="Pumba" id="P54753"/>
<dbReference type="Antibodypedia" id="2107">
    <property type="antibodies" value="616 antibodies from 37 providers"/>
</dbReference>
<dbReference type="DNASU" id="2049"/>
<dbReference type="Ensembl" id="ENST00000330394.3">
    <property type="protein sequence ID" value="ENSP00000332118.2"/>
    <property type="gene ID" value="ENSG00000182580.3"/>
</dbReference>
<dbReference type="GeneID" id="2049"/>
<dbReference type="KEGG" id="hsa:2049"/>
<dbReference type="MANE-Select" id="ENST00000330394.3">
    <property type="protein sequence ID" value="ENSP00000332118.2"/>
    <property type="RefSeq nucleotide sequence ID" value="NM_004443.4"/>
    <property type="RefSeq protein sequence ID" value="NP_004434.2"/>
</dbReference>
<dbReference type="UCSC" id="uc003foz.4">
    <property type="organism name" value="human"/>
</dbReference>
<dbReference type="AGR" id="HGNC:3394"/>
<dbReference type="CTD" id="2049"/>
<dbReference type="DisGeNET" id="2049"/>
<dbReference type="GeneCards" id="EPHB3"/>
<dbReference type="HGNC" id="HGNC:3394">
    <property type="gene designation" value="EPHB3"/>
</dbReference>
<dbReference type="HPA" id="ENSG00000182580">
    <property type="expression patterns" value="Tissue enhanced (skin)"/>
</dbReference>
<dbReference type="MIM" id="601839">
    <property type="type" value="gene"/>
</dbReference>
<dbReference type="neXtProt" id="NX_P54753"/>
<dbReference type="OpenTargets" id="ENSG00000182580"/>
<dbReference type="PharmGKB" id="PA27826"/>
<dbReference type="VEuPathDB" id="HostDB:ENSG00000182580"/>
<dbReference type="eggNOG" id="KOG0196">
    <property type="taxonomic scope" value="Eukaryota"/>
</dbReference>
<dbReference type="GeneTree" id="ENSGT00940000158024"/>
<dbReference type="HOGENOM" id="CLU_000288_141_0_1"/>
<dbReference type="InParanoid" id="P54753"/>
<dbReference type="OMA" id="DACYVVQ"/>
<dbReference type="OrthoDB" id="4062651at2759"/>
<dbReference type="PAN-GO" id="P54753">
    <property type="GO annotations" value="8 GO annotations based on evolutionary models"/>
</dbReference>
<dbReference type="PhylomeDB" id="P54753"/>
<dbReference type="TreeFam" id="TF315608"/>
<dbReference type="BRENDA" id="2.7.10.1">
    <property type="organism ID" value="2681"/>
</dbReference>
<dbReference type="PathwayCommons" id="P54753"/>
<dbReference type="Reactome" id="R-HSA-2682334">
    <property type="pathway name" value="EPH-Ephrin signaling"/>
</dbReference>
<dbReference type="Reactome" id="R-HSA-3928662">
    <property type="pathway name" value="EPHB-mediated forward signaling"/>
</dbReference>
<dbReference type="Reactome" id="R-HSA-3928664">
    <property type="pathway name" value="Ephrin signaling"/>
</dbReference>
<dbReference type="Reactome" id="R-HSA-3928665">
    <property type="pathway name" value="EPH-ephrin mediated repulsion of cells"/>
</dbReference>
<dbReference type="SignaLink" id="P54753"/>
<dbReference type="SIGNOR" id="P54753"/>
<dbReference type="BioGRID-ORCS" id="2049">
    <property type="hits" value="15 hits in 1193 CRISPR screens"/>
</dbReference>
<dbReference type="ChiTaRS" id="EPHB3">
    <property type="organism name" value="human"/>
</dbReference>
<dbReference type="EvolutionaryTrace" id="P54753"/>
<dbReference type="GeneWiki" id="EPHB3"/>
<dbReference type="GenomeRNAi" id="2049"/>
<dbReference type="Pharos" id="P54753">
    <property type="development level" value="Tchem"/>
</dbReference>
<dbReference type="PRO" id="PR:P54753"/>
<dbReference type="Proteomes" id="UP000005640">
    <property type="component" value="Chromosome 3"/>
</dbReference>
<dbReference type="RNAct" id="P54753">
    <property type="molecule type" value="protein"/>
</dbReference>
<dbReference type="Bgee" id="ENSG00000182580">
    <property type="expression patterns" value="Expressed in pancreatic ductal cell and 184 other cell types or tissues"/>
</dbReference>
<dbReference type="GO" id="GO:0005829">
    <property type="term" value="C:cytosol"/>
    <property type="evidence" value="ECO:0000304"/>
    <property type="project" value="Reactome"/>
</dbReference>
<dbReference type="GO" id="GO:0030425">
    <property type="term" value="C:dendrite"/>
    <property type="evidence" value="ECO:0000318"/>
    <property type="project" value="GO_Central"/>
</dbReference>
<dbReference type="GO" id="GO:0005576">
    <property type="term" value="C:extracellular region"/>
    <property type="evidence" value="ECO:0000304"/>
    <property type="project" value="Reactome"/>
</dbReference>
<dbReference type="GO" id="GO:0005886">
    <property type="term" value="C:plasma membrane"/>
    <property type="evidence" value="ECO:0000314"/>
    <property type="project" value="UniProtKB"/>
</dbReference>
<dbReference type="GO" id="GO:0005524">
    <property type="term" value="F:ATP binding"/>
    <property type="evidence" value="ECO:0007669"/>
    <property type="project" value="UniProtKB-KW"/>
</dbReference>
<dbReference type="GO" id="GO:0008046">
    <property type="term" value="F:axon guidance receptor activity"/>
    <property type="evidence" value="ECO:0007669"/>
    <property type="project" value="Ensembl"/>
</dbReference>
<dbReference type="GO" id="GO:0005003">
    <property type="term" value="F:ephrin receptor activity"/>
    <property type="evidence" value="ECO:0000314"/>
    <property type="project" value="UniProtKB"/>
</dbReference>
<dbReference type="GO" id="GO:0005005">
    <property type="term" value="F:transmembrane-ephrin receptor activity"/>
    <property type="evidence" value="ECO:0000318"/>
    <property type="project" value="GO_Central"/>
</dbReference>
<dbReference type="GO" id="GO:0001525">
    <property type="term" value="P:angiogenesis"/>
    <property type="evidence" value="ECO:0000250"/>
    <property type="project" value="UniProtKB"/>
</dbReference>
<dbReference type="GO" id="GO:0007411">
    <property type="term" value="P:axon guidance"/>
    <property type="evidence" value="ECO:0000250"/>
    <property type="project" value="UniProtKB"/>
</dbReference>
<dbReference type="GO" id="GO:0007413">
    <property type="term" value="P:axonal fasciculation"/>
    <property type="evidence" value="ECO:0000250"/>
    <property type="project" value="UniProtKB"/>
</dbReference>
<dbReference type="GO" id="GO:0016477">
    <property type="term" value="P:cell migration"/>
    <property type="evidence" value="ECO:0000314"/>
    <property type="project" value="UniProtKB"/>
</dbReference>
<dbReference type="GO" id="GO:0021952">
    <property type="term" value="P:central nervous system projection neuron axonogenesis"/>
    <property type="evidence" value="ECO:0007669"/>
    <property type="project" value="Ensembl"/>
</dbReference>
<dbReference type="GO" id="GO:0022038">
    <property type="term" value="P:corpus callosum development"/>
    <property type="evidence" value="ECO:0000250"/>
    <property type="project" value="UniProtKB"/>
</dbReference>
<dbReference type="GO" id="GO:0060996">
    <property type="term" value="P:dendritic spine development"/>
    <property type="evidence" value="ECO:0000250"/>
    <property type="project" value="UniProtKB"/>
</dbReference>
<dbReference type="GO" id="GO:0060997">
    <property type="term" value="P:dendritic spine morphogenesis"/>
    <property type="evidence" value="ECO:0000250"/>
    <property type="project" value="UniProtKB"/>
</dbReference>
<dbReference type="GO" id="GO:0048546">
    <property type="term" value="P:digestive tract morphogenesis"/>
    <property type="evidence" value="ECO:0000250"/>
    <property type="project" value="UniProtKB"/>
</dbReference>
<dbReference type="GO" id="GO:0048013">
    <property type="term" value="P:ephrin receptor signaling pathway"/>
    <property type="evidence" value="ECO:0000314"/>
    <property type="project" value="UniProtKB"/>
</dbReference>
<dbReference type="GO" id="GO:0051965">
    <property type="term" value="P:positive regulation of synapse assembly"/>
    <property type="evidence" value="ECO:0000250"/>
    <property type="project" value="UniProtKB"/>
</dbReference>
<dbReference type="GO" id="GO:0046777">
    <property type="term" value="P:protein autophosphorylation"/>
    <property type="evidence" value="ECO:0000314"/>
    <property type="project" value="UniProtKB"/>
</dbReference>
<dbReference type="GO" id="GO:0050770">
    <property type="term" value="P:regulation of axonogenesis"/>
    <property type="evidence" value="ECO:0000250"/>
    <property type="project" value="UniProtKB"/>
</dbReference>
<dbReference type="GO" id="GO:0022407">
    <property type="term" value="P:regulation of cell-cell adhesion"/>
    <property type="evidence" value="ECO:0000314"/>
    <property type="project" value="UniProtKB"/>
</dbReference>
<dbReference type="GO" id="GO:0043087">
    <property type="term" value="P:regulation of GTPase activity"/>
    <property type="evidence" value="ECO:0000314"/>
    <property type="project" value="UniProtKB"/>
</dbReference>
<dbReference type="GO" id="GO:0031290">
    <property type="term" value="P:retinal ganglion cell axon guidance"/>
    <property type="evidence" value="ECO:0007669"/>
    <property type="project" value="Ensembl"/>
</dbReference>
<dbReference type="GO" id="GO:0060021">
    <property type="term" value="P:roof of mouth development"/>
    <property type="evidence" value="ECO:0000250"/>
    <property type="project" value="UniProtKB"/>
</dbReference>
<dbReference type="GO" id="GO:0034446">
    <property type="term" value="P:substrate adhesion-dependent cell spreading"/>
    <property type="evidence" value="ECO:0000314"/>
    <property type="project" value="UniProtKB"/>
</dbReference>
<dbReference type="GO" id="GO:0048538">
    <property type="term" value="P:thymus development"/>
    <property type="evidence" value="ECO:0000250"/>
    <property type="project" value="UniProtKB"/>
</dbReference>
<dbReference type="GO" id="GO:0001655">
    <property type="term" value="P:urogenital system development"/>
    <property type="evidence" value="ECO:0000250"/>
    <property type="project" value="UniProtKB"/>
</dbReference>
<dbReference type="CDD" id="cd10478">
    <property type="entry name" value="EphR_LBD_B3"/>
    <property type="match status" value="1"/>
</dbReference>
<dbReference type="CDD" id="cd00063">
    <property type="entry name" value="FN3"/>
    <property type="match status" value="2"/>
</dbReference>
<dbReference type="CDD" id="cd05065">
    <property type="entry name" value="PTKc_EphR_B"/>
    <property type="match status" value="1"/>
</dbReference>
<dbReference type="CDD" id="cd00185">
    <property type="entry name" value="TNFRSF"/>
    <property type="match status" value="1"/>
</dbReference>
<dbReference type="FunFam" id="2.60.40.10:FF:000041">
    <property type="entry name" value="ephrin type-A receptor 3"/>
    <property type="match status" value="1"/>
</dbReference>
<dbReference type="FunFam" id="1.10.150.50:FF:000001">
    <property type="entry name" value="Ephrin type-A receptor 5"/>
    <property type="match status" value="1"/>
</dbReference>
<dbReference type="FunFam" id="2.10.50.10:FF:000001">
    <property type="entry name" value="Ephrin type-A receptor 5"/>
    <property type="match status" value="1"/>
</dbReference>
<dbReference type="FunFam" id="2.60.40.1770:FF:000001">
    <property type="entry name" value="Ephrin type-A receptor 5"/>
    <property type="match status" value="1"/>
</dbReference>
<dbReference type="FunFam" id="3.30.200.20:FF:000001">
    <property type="entry name" value="Ephrin type-A receptor 5"/>
    <property type="match status" value="1"/>
</dbReference>
<dbReference type="FunFam" id="1.10.510.10:FF:000015">
    <property type="entry name" value="Ephrin type-B receptor 2"/>
    <property type="match status" value="1"/>
</dbReference>
<dbReference type="FunFam" id="2.60.120.260:FF:000004">
    <property type="entry name" value="Ephrin type-B receptor 2"/>
    <property type="match status" value="1"/>
</dbReference>
<dbReference type="FunFam" id="2.60.40.10:FF:000520">
    <property type="entry name" value="ephrin type-B receptor 3"/>
    <property type="match status" value="1"/>
</dbReference>
<dbReference type="Gene3D" id="2.60.40.1770">
    <property type="entry name" value="ephrin a2 ectodomain"/>
    <property type="match status" value="1"/>
</dbReference>
<dbReference type="Gene3D" id="2.60.120.260">
    <property type="entry name" value="Galactose-binding domain-like"/>
    <property type="match status" value="1"/>
</dbReference>
<dbReference type="Gene3D" id="2.60.40.10">
    <property type="entry name" value="Immunoglobulins"/>
    <property type="match status" value="2"/>
</dbReference>
<dbReference type="Gene3D" id="3.30.200.20">
    <property type="entry name" value="Phosphorylase Kinase, domain 1"/>
    <property type="match status" value="1"/>
</dbReference>
<dbReference type="Gene3D" id="1.10.150.50">
    <property type="entry name" value="Transcription Factor, Ets-1"/>
    <property type="match status" value="1"/>
</dbReference>
<dbReference type="Gene3D" id="1.10.510.10">
    <property type="entry name" value="Transferase(Phosphotransferase) domain 1"/>
    <property type="match status" value="1"/>
</dbReference>
<dbReference type="Gene3D" id="2.10.50.10">
    <property type="entry name" value="Tumor Necrosis Factor Receptor, subunit A, domain 2"/>
    <property type="match status" value="1"/>
</dbReference>
<dbReference type="InterPro" id="IPR027936">
    <property type="entry name" value="Eph_TM"/>
</dbReference>
<dbReference type="InterPro" id="IPR034245">
    <property type="entry name" value="EphB3_rcpt_lig-bd"/>
</dbReference>
<dbReference type="InterPro" id="IPR001090">
    <property type="entry name" value="Ephrin_rcpt_lig-bd_dom"/>
</dbReference>
<dbReference type="InterPro" id="IPR050449">
    <property type="entry name" value="Ephrin_rcpt_TKs"/>
</dbReference>
<dbReference type="InterPro" id="IPR003961">
    <property type="entry name" value="FN3_dom"/>
</dbReference>
<dbReference type="InterPro" id="IPR036116">
    <property type="entry name" value="FN3_sf"/>
</dbReference>
<dbReference type="InterPro" id="IPR008979">
    <property type="entry name" value="Galactose-bd-like_sf"/>
</dbReference>
<dbReference type="InterPro" id="IPR013783">
    <property type="entry name" value="Ig-like_fold"/>
</dbReference>
<dbReference type="InterPro" id="IPR011009">
    <property type="entry name" value="Kinase-like_dom_sf"/>
</dbReference>
<dbReference type="InterPro" id="IPR000719">
    <property type="entry name" value="Prot_kinase_dom"/>
</dbReference>
<dbReference type="InterPro" id="IPR017441">
    <property type="entry name" value="Protein_kinase_ATP_BS"/>
</dbReference>
<dbReference type="InterPro" id="IPR001660">
    <property type="entry name" value="SAM"/>
</dbReference>
<dbReference type="InterPro" id="IPR013761">
    <property type="entry name" value="SAM/pointed_sf"/>
</dbReference>
<dbReference type="InterPro" id="IPR001245">
    <property type="entry name" value="Ser-Thr/Tyr_kinase_cat_dom"/>
</dbReference>
<dbReference type="InterPro" id="IPR011641">
    <property type="entry name" value="Tyr-kin_ephrin_A/B_rcpt-like"/>
</dbReference>
<dbReference type="InterPro" id="IPR008266">
    <property type="entry name" value="Tyr_kinase_AS"/>
</dbReference>
<dbReference type="InterPro" id="IPR020635">
    <property type="entry name" value="Tyr_kinase_cat_dom"/>
</dbReference>
<dbReference type="InterPro" id="IPR016257">
    <property type="entry name" value="Tyr_kinase_ephrin_rcpt"/>
</dbReference>
<dbReference type="InterPro" id="IPR001426">
    <property type="entry name" value="Tyr_kinase_rcpt_V_CS"/>
</dbReference>
<dbReference type="PANTHER" id="PTHR46877">
    <property type="entry name" value="EPH RECEPTOR A5"/>
    <property type="match status" value="1"/>
</dbReference>
<dbReference type="PANTHER" id="PTHR46877:SF6">
    <property type="entry name" value="EPHRIN TYPE-B RECEPTOR 3"/>
    <property type="match status" value="1"/>
</dbReference>
<dbReference type="Pfam" id="PF14575">
    <property type="entry name" value="EphA2_TM"/>
    <property type="match status" value="1"/>
</dbReference>
<dbReference type="Pfam" id="PF01404">
    <property type="entry name" value="Ephrin_lbd"/>
    <property type="match status" value="1"/>
</dbReference>
<dbReference type="Pfam" id="PF07699">
    <property type="entry name" value="Ephrin_rec_like"/>
    <property type="match status" value="1"/>
</dbReference>
<dbReference type="Pfam" id="PF00041">
    <property type="entry name" value="fn3"/>
    <property type="match status" value="2"/>
</dbReference>
<dbReference type="Pfam" id="PF07714">
    <property type="entry name" value="PK_Tyr_Ser-Thr"/>
    <property type="match status" value="1"/>
</dbReference>
<dbReference type="Pfam" id="PF00536">
    <property type="entry name" value="SAM_1"/>
    <property type="match status" value="1"/>
</dbReference>
<dbReference type="PIRSF" id="PIRSF000666">
    <property type="entry name" value="TyrPK_ephrin_receptor"/>
    <property type="match status" value="1"/>
</dbReference>
<dbReference type="PRINTS" id="PR00014">
    <property type="entry name" value="FNTYPEIII"/>
</dbReference>
<dbReference type="PRINTS" id="PR00109">
    <property type="entry name" value="TYRKINASE"/>
</dbReference>
<dbReference type="SMART" id="SM00615">
    <property type="entry name" value="EPH_lbd"/>
    <property type="match status" value="1"/>
</dbReference>
<dbReference type="SMART" id="SM01411">
    <property type="entry name" value="Ephrin_rec_like"/>
    <property type="match status" value="1"/>
</dbReference>
<dbReference type="SMART" id="SM00060">
    <property type="entry name" value="FN3"/>
    <property type="match status" value="2"/>
</dbReference>
<dbReference type="SMART" id="SM00454">
    <property type="entry name" value="SAM"/>
    <property type="match status" value="1"/>
</dbReference>
<dbReference type="SMART" id="SM00219">
    <property type="entry name" value="TyrKc"/>
    <property type="match status" value="1"/>
</dbReference>
<dbReference type="SUPFAM" id="SSF49265">
    <property type="entry name" value="Fibronectin type III"/>
    <property type="match status" value="1"/>
</dbReference>
<dbReference type="SUPFAM" id="SSF49785">
    <property type="entry name" value="Galactose-binding domain-like"/>
    <property type="match status" value="1"/>
</dbReference>
<dbReference type="SUPFAM" id="SSF56112">
    <property type="entry name" value="Protein kinase-like (PK-like)"/>
    <property type="match status" value="1"/>
</dbReference>
<dbReference type="SUPFAM" id="SSF47769">
    <property type="entry name" value="SAM/Pointed domain"/>
    <property type="match status" value="1"/>
</dbReference>
<dbReference type="PROSITE" id="PS51550">
    <property type="entry name" value="EPH_LBD"/>
    <property type="match status" value="1"/>
</dbReference>
<dbReference type="PROSITE" id="PS50853">
    <property type="entry name" value="FN3"/>
    <property type="match status" value="2"/>
</dbReference>
<dbReference type="PROSITE" id="PS00107">
    <property type="entry name" value="PROTEIN_KINASE_ATP"/>
    <property type="match status" value="1"/>
</dbReference>
<dbReference type="PROSITE" id="PS50011">
    <property type="entry name" value="PROTEIN_KINASE_DOM"/>
    <property type="match status" value="1"/>
</dbReference>
<dbReference type="PROSITE" id="PS00109">
    <property type="entry name" value="PROTEIN_KINASE_TYR"/>
    <property type="match status" value="1"/>
</dbReference>
<dbReference type="PROSITE" id="PS00790">
    <property type="entry name" value="RECEPTOR_TYR_KIN_V_1"/>
    <property type="match status" value="1"/>
</dbReference>
<dbReference type="PROSITE" id="PS00791">
    <property type="entry name" value="RECEPTOR_TYR_KIN_V_2"/>
    <property type="match status" value="1"/>
</dbReference>
<dbReference type="PROSITE" id="PS50105">
    <property type="entry name" value="SAM_DOMAIN"/>
    <property type="match status" value="1"/>
</dbReference>
<accession>P54753</accession>
<accession>Q7Z740</accession>
<gene>
    <name type="primary">EPHB3</name>
    <name type="synonym">ETK2</name>
    <name type="synonym">HEK2</name>
    <name type="synonym">TYRO6</name>
</gene>
<feature type="signal peptide" evidence="2">
    <location>
        <begin position="1"/>
        <end position="33"/>
    </location>
</feature>
<feature type="chain" id="PRO_0000016831" description="Ephrin type-B receptor 3">
    <location>
        <begin position="34"/>
        <end position="998"/>
    </location>
</feature>
<feature type="topological domain" description="Extracellular" evidence="2">
    <location>
        <begin position="34"/>
        <end position="559"/>
    </location>
</feature>
<feature type="transmembrane region" description="Helical" evidence="2">
    <location>
        <begin position="560"/>
        <end position="580"/>
    </location>
</feature>
<feature type="topological domain" description="Cytoplasmic" evidence="2">
    <location>
        <begin position="581"/>
        <end position="998"/>
    </location>
</feature>
<feature type="domain" description="Eph LBD" evidence="6">
    <location>
        <begin position="39"/>
        <end position="217"/>
    </location>
</feature>
<feature type="domain" description="Fibronectin type-III 1" evidence="5">
    <location>
        <begin position="339"/>
        <end position="451"/>
    </location>
</feature>
<feature type="domain" description="Fibronectin type-III 2" evidence="5">
    <location>
        <begin position="452"/>
        <end position="545"/>
    </location>
</feature>
<feature type="domain" description="Protein kinase" evidence="3">
    <location>
        <begin position="633"/>
        <end position="896"/>
    </location>
</feature>
<feature type="domain" description="SAM" evidence="4">
    <location>
        <begin position="925"/>
        <end position="989"/>
    </location>
</feature>
<feature type="short sequence motif" description="PDZ-binding" evidence="2">
    <location>
        <begin position="996"/>
        <end position="998"/>
    </location>
</feature>
<feature type="active site" description="Proton acceptor" evidence="3 7">
    <location>
        <position position="758"/>
    </location>
</feature>
<feature type="binding site" evidence="3">
    <location>
        <begin position="639"/>
        <end position="647"/>
    </location>
    <ligand>
        <name>ATP</name>
        <dbReference type="ChEBI" id="CHEBI:30616"/>
    </ligand>
</feature>
<feature type="binding site" evidence="3">
    <location>
        <position position="665"/>
    </location>
    <ligand>
        <name>ATP</name>
        <dbReference type="ChEBI" id="CHEBI:30616"/>
    </ligand>
</feature>
<feature type="modified residue" description="Phosphotyrosine; by autocatalysis" evidence="11">
    <location>
        <position position="614"/>
    </location>
</feature>
<feature type="glycosylation site" description="N-linked (GlcNAc...) asparagine" evidence="2">
    <location>
        <position position="351"/>
    </location>
</feature>
<feature type="glycosylation site" description="N-linked (GlcNAc...) asparagine" evidence="2">
    <location>
        <position position="445"/>
    </location>
</feature>
<feature type="disulfide bond" evidence="12">
    <location>
        <begin position="81"/>
        <end position="199"/>
    </location>
</feature>
<feature type="sequence variant" id="VAR_042176" description="In a lung small cell carcinoma sample; somatic mutation." evidence="9">
    <original>R</original>
    <variation>L</variation>
    <location>
        <position position="168"/>
    </location>
</feature>
<feature type="sequence variant" id="VAR_042177" description="In dbSNP:rs56029711." evidence="9">
    <original>R</original>
    <variation>C</variation>
    <location>
        <position position="440"/>
    </location>
</feature>
<feature type="sequence variant" id="VAR_042178" description="In dbSNP:rs56103851." evidence="9">
    <original>I</original>
    <variation>V</variation>
    <location>
        <position position="579"/>
    </location>
</feature>
<feature type="sequence variant" id="VAR_042179" description="In dbSNP:rs56129875." evidence="9">
    <original>I</original>
    <variation>L</variation>
    <location>
        <position position="601"/>
    </location>
</feature>
<feature type="sequence variant" id="VAR_042180" description="In a lung neuroendocrine carcinoma sample; somatic mutation; dbSNP:rs371378866." evidence="9">
    <original>R</original>
    <variation>W</variation>
    <location>
        <position position="724"/>
    </location>
</feature>
<feature type="mutagenesis site" description="Partial loss of phosphorylation and loss of interaction with SH2-containing proteins." evidence="11">
    <original>Y</original>
    <variation>F</variation>
    <location>
        <position position="614"/>
    </location>
</feature>
<feature type="mutagenesis site" description="Kinase-dead. Loss of autophosphorylation." evidence="11">
    <original>K</original>
    <variation>R</variation>
    <location>
        <position position="665"/>
    </location>
</feature>
<feature type="sequence conflict" description="In Ref. 1; CAA53021." evidence="13" ref="1">
    <original>G</original>
    <variation>V</variation>
    <location>
        <position position="367"/>
    </location>
</feature>
<feature type="sequence conflict" description="In Ref. 1; CAA53021." evidence="13" ref="1">
    <original>TER</original>
    <variation>SEP</variation>
    <location>
        <begin position="406"/>
        <end position="408"/>
    </location>
</feature>
<feature type="sequence conflict" description="In Ref. 1; CAA53021." evidence="13" ref="1">
    <original>I</original>
    <variation>T</variation>
    <location>
        <position position="412"/>
    </location>
</feature>
<feature type="strand" evidence="14">
    <location>
        <begin position="39"/>
        <end position="44"/>
    </location>
</feature>
<feature type="helix" evidence="14">
    <location>
        <begin position="45"/>
        <end position="47"/>
    </location>
</feature>
<feature type="strand" evidence="14">
    <location>
        <begin position="55"/>
        <end position="58"/>
    </location>
</feature>
<feature type="strand" evidence="14">
    <location>
        <begin position="63"/>
        <end position="68"/>
    </location>
</feature>
<feature type="strand" evidence="14">
    <location>
        <begin position="74"/>
        <end position="80"/>
    </location>
</feature>
<feature type="strand" evidence="14">
    <location>
        <begin position="85"/>
        <end position="87"/>
    </location>
</feature>
<feature type="strand" evidence="14">
    <location>
        <begin position="90"/>
        <end position="93"/>
    </location>
</feature>
<feature type="strand" evidence="14">
    <location>
        <begin position="103"/>
        <end position="114"/>
    </location>
</feature>
<feature type="helix" evidence="14">
    <location>
        <begin position="116"/>
        <end position="118"/>
    </location>
</feature>
<feature type="strand" evidence="14">
    <location>
        <begin position="130"/>
        <end position="139"/>
    </location>
</feature>
<feature type="strand" evidence="14">
    <location>
        <begin position="155"/>
        <end position="160"/>
    </location>
</feature>
<feature type="strand" evidence="14">
    <location>
        <begin position="175"/>
        <end position="181"/>
    </location>
</feature>
<feature type="strand" evidence="14">
    <location>
        <begin position="186"/>
        <end position="198"/>
    </location>
</feature>
<feature type="strand" evidence="14">
    <location>
        <begin position="200"/>
        <end position="210"/>
    </location>
</feature>
<feature type="strand" evidence="15">
    <location>
        <begin position="633"/>
        <end position="640"/>
    </location>
</feature>
<feature type="strand" evidence="15">
    <location>
        <begin position="646"/>
        <end position="652"/>
    </location>
</feature>
<feature type="strand" evidence="16">
    <location>
        <begin position="655"/>
        <end position="657"/>
    </location>
</feature>
<feature type="strand" evidence="15">
    <location>
        <begin position="660"/>
        <end position="666"/>
    </location>
</feature>
<feature type="helix" evidence="15">
    <location>
        <begin position="673"/>
        <end position="687"/>
    </location>
</feature>
<feature type="strand" evidence="15">
    <location>
        <begin position="697"/>
        <end position="701"/>
    </location>
</feature>
<feature type="strand" evidence="15">
    <location>
        <begin position="703"/>
        <end position="706"/>
    </location>
</feature>
<feature type="strand" evidence="15">
    <location>
        <begin position="708"/>
        <end position="712"/>
    </location>
</feature>
<feature type="helix" evidence="15">
    <location>
        <begin position="719"/>
        <end position="725"/>
    </location>
</feature>
<feature type="turn" evidence="15">
    <location>
        <begin position="726"/>
        <end position="728"/>
    </location>
</feature>
<feature type="helix" evidence="15">
    <location>
        <begin position="732"/>
        <end position="751"/>
    </location>
</feature>
<feature type="helix" evidence="15">
    <location>
        <begin position="761"/>
        <end position="763"/>
    </location>
</feature>
<feature type="strand" evidence="15">
    <location>
        <begin position="764"/>
        <end position="766"/>
    </location>
</feature>
<feature type="strand" evidence="15">
    <location>
        <begin position="772"/>
        <end position="774"/>
    </location>
</feature>
<feature type="strand" evidence="15">
    <location>
        <begin position="791"/>
        <end position="793"/>
    </location>
</feature>
<feature type="strand" evidence="16">
    <location>
        <begin position="796"/>
        <end position="798"/>
    </location>
</feature>
<feature type="helix" evidence="15">
    <location>
        <begin position="802"/>
        <end position="804"/>
    </location>
</feature>
<feature type="helix" evidence="15">
    <location>
        <begin position="807"/>
        <end position="812"/>
    </location>
</feature>
<feature type="helix" evidence="15">
    <location>
        <begin position="817"/>
        <end position="832"/>
    </location>
</feature>
<feature type="turn" evidence="15">
    <location>
        <begin position="838"/>
        <end position="841"/>
    </location>
</feature>
<feature type="helix" evidence="15">
    <location>
        <begin position="844"/>
        <end position="852"/>
    </location>
</feature>
<feature type="helix" evidence="15">
    <location>
        <begin position="865"/>
        <end position="874"/>
    </location>
</feature>
<feature type="turn" evidence="15">
    <location>
        <begin position="879"/>
        <end position="881"/>
    </location>
</feature>
<feature type="helix" evidence="15">
    <location>
        <begin position="885"/>
        <end position="897"/>
    </location>
</feature>
<feature type="helix" evidence="15">
    <location>
        <begin position="899"/>
        <end position="902"/>
    </location>
</feature>
<keyword id="KW-0002">3D-structure</keyword>
<keyword id="KW-0037">Angiogenesis</keyword>
<keyword id="KW-0067">ATP-binding</keyword>
<keyword id="KW-1003">Cell membrane</keyword>
<keyword id="KW-0966">Cell projection</keyword>
<keyword id="KW-0217">Developmental protein</keyword>
<keyword id="KW-1015">Disulfide bond</keyword>
<keyword id="KW-0325">Glycoprotein</keyword>
<keyword id="KW-0418">Kinase</keyword>
<keyword id="KW-0472">Membrane</keyword>
<keyword id="KW-0524">Neurogenesis</keyword>
<keyword id="KW-0547">Nucleotide-binding</keyword>
<keyword id="KW-0597">Phosphoprotein</keyword>
<keyword id="KW-1267">Proteomics identification</keyword>
<keyword id="KW-0675">Receptor</keyword>
<keyword id="KW-1185">Reference proteome</keyword>
<keyword id="KW-0677">Repeat</keyword>
<keyword id="KW-0732">Signal</keyword>
<keyword id="KW-0808">Transferase</keyword>
<keyword id="KW-0812">Transmembrane</keyword>
<keyword id="KW-1133">Transmembrane helix</keyword>
<keyword id="KW-0829">Tyrosine-protein kinase</keyword>
<keyword id="KW-0832">Ubl conjugation</keyword>
<name>EPHB3_HUMAN</name>